<feature type="initiator methionine" description="Removed" evidence="2">
    <location>
        <position position="1"/>
    </location>
</feature>
<feature type="chain" id="PRO_0000211010" description="Ubiquilin-1">
    <location>
        <begin position="2"/>
        <end position="582"/>
    </location>
</feature>
<feature type="domain" description="Ubiquitin-like" evidence="5">
    <location>
        <begin position="28"/>
        <end position="102"/>
    </location>
</feature>
<feature type="domain" description="STI1 1" evidence="3">
    <location>
        <begin position="173"/>
        <end position="201"/>
    </location>
</feature>
<feature type="domain" description="STI1 2" evidence="3">
    <location>
        <begin position="203"/>
        <end position="242"/>
    </location>
</feature>
<feature type="domain" description="STI1 3" evidence="3">
    <location>
        <begin position="381"/>
        <end position="428"/>
    </location>
</feature>
<feature type="domain" description="STI1 4" evidence="3">
    <location>
        <begin position="432"/>
        <end position="464"/>
    </location>
</feature>
<feature type="domain" description="UBA" evidence="4">
    <location>
        <begin position="539"/>
        <end position="579"/>
    </location>
</feature>
<feature type="region of interest" description="Disordered" evidence="6">
    <location>
        <begin position="1"/>
        <end position="26"/>
    </location>
</feature>
<feature type="region of interest" description="Disordered" evidence="6">
    <location>
        <begin position="102"/>
        <end position="136"/>
    </location>
</feature>
<feature type="region of interest" description="Interaction with UBXN4" evidence="2">
    <location>
        <begin position="169"/>
        <end position="422"/>
    </location>
</feature>
<feature type="region of interest" description="Disordered" evidence="6">
    <location>
        <begin position="285"/>
        <end position="365"/>
    </location>
</feature>
<feature type="region of interest" description="Disordered" evidence="6">
    <location>
        <begin position="481"/>
        <end position="513"/>
    </location>
</feature>
<feature type="compositionally biased region" description="Polar residues" evidence="6">
    <location>
        <begin position="102"/>
        <end position="135"/>
    </location>
</feature>
<feature type="compositionally biased region" description="Polar residues" evidence="6">
    <location>
        <begin position="290"/>
        <end position="304"/>
    </location>
</feature>
<feature type="compositionally biased region" description="Low complexity" evidence="6">
    <location>
        <begin position="318"/>
        <end position="346"/>
    </location>
</feature>
<feature type="modified residue" description="N-acetylalanine" evidence="2">
    <location>
        <position position="2"/>
    </location>
</feature>
<feature type="sequence conflict" description="In Ref. 3; AA sequence." evidence="10" ref="3">
    <original>HI</original>
    <variation>QT</variation>
    <location>
        <begin position="63"/>
        <end position="64"/>
    </location>
</feature>
<feature type="sequence conflict" description="In Ref. 2; AAH72477." evidence="10" ref="2">
    <original>N</original>
    <variation>D</variation>
    <location>
        <position position="224"/>
    </location>
</feature>
<feature type="sequence conflict" description="In Ref. 2; AAH72477." evidence="10" ref="2">
    <original>ERD</original>
    <variation>DRA</variation>
    <location>
        <begin position="247"/>
        <end position="249"/>
    </location>
</feature>
<gene>
    <name type="primary">Ubqln1</name>
    <name type="synonym">Da41</name>
    <name type="synonym">Plic1</name>
</gene>
<reference key="1">
    <citation type="journal article" date="1997" name="DNA Cell Biol.">
        <title>Identification of a new cellular protein that can interact specifically with DAN.</title>
        <authorList>
            <person name="Ozaki T."/>
            <person name="Hishiki T."/>
            <person name="Toyama Y."/>
            <person name="Yuasa S."/>
            <person name="Nakagawara A."/>
            <person name="Sakiyama S."/>
        </authorList>
    </citation>
    <scope>NUCLEOTIDE SEQUENCE [MRNA]</scope>
    <scope>INTERACTION WITH NBL1</scope>
</reference>
<reference key="2">
    <citation type="journal article" date="2004" name="Genome Res.">
        <title>The status, quality, and expansion of the NIH full-length cDNA project: the Mammalian Gene Collection (MGC).</title>
        <authorList>
            <consortium name="The MGC Project Team"/>
        </authorList>
    </citation>
    <scope>NUCLEOTIDE SEQUENCE [LARGE SCALE MRNA]</scope>
    <source>
        <tissue>Heart</tissue>
    </source>
</reference>
<reference key="3">
    <citation type="submission" date="2007-04" db="UniProtKB">
        <authorList>
            <person name="Lubec G."/>
            <person name="Chen W.-Q."/>
            <person name="Diao W."/>
        </authorList>
    </citation>
    <scope>PROTEIN SEQUENCE OF 37-53; 62-74; 198-212; 245-263 AND 540-575</scope>
    <scope>IDENTIFICATION BY MASS SPECTROMETRY</scope>
    <source>
        <strain>Sprague-Dawley</strain>
        <tissue>Hippocampus</tissue>
    </source>
</reference>
<reference key="4">
    <citation type="journal article" date="2001" name="Nat. Neurosci.">
        <title>GABA(A) receptor cell surface number and subunit stability are regulated by the ubiquitin-like protein Plic-1.</title>
        <authorList>
            <person name="Bedford F.K."/>
            <person name="Kittler J.T."/>
            <person name="Muller E."/>
            <person name="Thomas P."/>
            <person name="Uren J.M."/>
            <person name="Merlo D."/>
            <person name="Wisden W."/>
            <person name="Triller A."/>
            <person name="Smart T.G."/>
            <person name="Moss S.J."/>
        </authorList>
    </citation>
    <scope>FUNCTION</scope>
    <scope>INTERACTION WITH GABRA1; GABRA2; GABRA3; GABRA6; GABRB1; GABRB2 AND GABRB3</scope>
    <scope>SUBCELLULAR LOCATION</scope>
    <scope>TISSUE SPECIFICITY</scope>
</reference>
<reference key="5">
    <citation type="journal article" date="2012" name="Proc. Natl. Acad. Sci. U.S.A.">
        <title>Ubiquilin-1 regulates amyloid precursor protein maturation and degradation by stimulating K63-linked polyubiquitination of lysine 688.</title>
        <authorList>
            <person name="El Ayadi A."/>
            <person name="Stieren E.S."/>
            <person name="Barral J.M."/>
            <person name="Boehning D."/>
        </authorList>
    </citation>
    <scope>FUNCTION</scope>
</reference>
<reference key="6">
    <citation type="journal article" date="2002" name="J. Mol. Biol.">
        <title>Crystal structures of two rat MHC class Ia (RT1-A) molecules that are associated differentially with peptide transporter alleles TAP-A and TAP-B.</title>
        <authorList>
            <person name="Rudolph M.G."/>
            <person name="Stevens J."/>
            <person name="Speir J.A."/>
            <person name="Trowsdale J."/>
            <person name="Butcher G.W."/>
            <person name="Joly E."/>
            <person name="Wilson I.A."/>
        </authorList>
    </citation>
    <scope>X-RAY CRYSTALLOGRAPHY (1.48 ANGSTROMS) OF 450-458 IN COMPLEX WITH MHC I</scope>
</reference>
<sequence length="582" mass="62072">MAESAESGGPPGAQDSAADSGPAEPKIMKVTVKTPKEKEEFAVPENSSVQQFKEEISKRFKSHIDQLVLIFAGKILKDQDTLSQHGIHDGLTVHLVIKTQNRPQDNSAQQTNTTGNSVTSSPAPDSNPTSGPAANSSFGLGGLGGLAGLSSLGLNTTNFSELQSQMQRQLLSNPEMMVQIMENPFVQSMLSNPDLMRQLIMANPQMQQLIQRNPEISHMLNNPNIMRQTLELARNPAMMQEMMRNQERDLSNLESIPGGYNALRRMYTDIQEPMLNAAQEQFGGNPFASLVSSPSSAEGTQPSRTENRDPLPNPWAPQTPQSSPASGSTGSTTNTVSTSAGNATSTPAGQGTSGPNLVPGAGASMFNTPGMQSLLQQITENPQLMQNMLSAPYMRSMMQSLSQNPDLAAQMMLNNPLFAGNPQLQEQMRQQLPTFLQQMQNPDTLSAMSNPRAMQALLQIQQGLQTLATEAPGLIPGFTPGLAAGNSGGPAGTTAPSTAPGEDTNPQGGAAEPGHQQFIQQMLQALAGVNPQLQSPEVRFQQQLEQLSAMGFLNREANLQALIATGGDINAAIERLLGSQPS</sequence>
<protein>
    <recommendedName>
        <fullName>Ubiquilin-1</fullName>
    </recommendedName>
    <alternativeName>
        <fullName>Protein linking IAP with cytoskeleton 1</fullName>
        <shortName>PLIC-1</shortName>
    </alternativeName>
</protein>
<proteinExistence type="evidence at protein level"/>
<evidence type="ECO:0000250" key="1">
    <source>
        <dbReference type="UniProtKB" id="Q8R317"/>
    </source>
</evidence>
<evidence type="ECO:0000250" key="2">
    <source>
        <dbReference type="UniProtKB" id="Q9UMX0"/>
    </source>
</evidence>
<evidence type="ECO:0000255" key="3"/>
<evidence type="ECO:0000255" key="4">
    <source>
        <dbReference type="PROSITE-ProRule" id="PRU00212"/>
    </source>
</evidence>
<evidence type="ECO:0000255" key="5">
    <source>
        <dbReference type="PROSITE-ProRule" id="PRU00214"/>
    </source>
</evidence>
<evidence type="ECO:0000256" key="6">
    <source>
        <dbReference type="SAM" id="MobiDB-lite"/>
    </source>
</evidence>
<evidence type="ECO:0000269" key="7">
    <source>
    </source>
</evidence>
<evidence type="ECO:0000269" key="8">
    <source>
    </source>
</evidence>
<evidence type="ECO:0000269" key="9">
    <source>
    </source>
</evidence>
<evidence type="ECO:0000305" key="10"/>
<dbReference type="EMBL" id="D87950">
    <property type="protein sequence ID" value="BAA92267.1"/>
    <property type="molecule type" value="mRNA"/>
</dbReference>
<dbReference type="EMBL" id="BC072477">
    <property type="protein sequence ID" value="AAH72477.1"/>
    <property type="molecule type" value="mRNA"/>
</dbReference>
<dbReference type="RefSeq" id="NP_446199.2">
    <property type="nucleotide sequence ID" value="NM_053747.2"/>
</dbReference>
<dbReference type="PDB" id="1KJV">
    <property type="method" value="X-ray"/>
    <property type="resolution" value="1.48 A"/>
    <property type="chains" value="P=450-458"/>
</dbReference>
<dbReference type="PDBsum" id="1KJV"/>
<dbReference type="SMR" id="Q9JJP9"/>
<dbReference type="BioGRID" id="250384">
    <property type="interactions" value="4"/>
</dbReference>
<dbReference type="FunCoup" id="Q9JJP9">
    <property type="interactions" value="4473"/>
</dbReference>
<dbReference type="IntAct" id="Q9JJP9">
    <property type="interactions" value="1"/>
</dbReference>
<dbReference type="STRING" id="10116.ENSRNOP00000057944"/>
<dbReference type="GlyGen" id="Q9JJP9">
    <property type="glycosylation" value="1 site, 1 O-linked glycan (1 site)"/>
</dbReference>
<dbReference type="iPTMnet" id="Q9JJP9"/>
<dbReference type="PhosphoSitePlus" id="Q9JJP9"/>
<dbReference type="jPOST" id="Q9JJP9"/>
<dbReference type="PaxDb" id="10116-ENSRNOP00000057944"/>
<dbReference type="GeneID" id="114590"/>
<dbReference type="KEGG" id="rno:114590"/>
<dbReference type="UCSC" id="RGD:620745">
    <property type="organism name" value="rat"/>
</dbReference>
<dbReference type="AGR" id="RGD:620745"/>
<dbReference type="CTD" id="29979"/>
<dbReference type="RGD" id="620745">
    <property type="gene designation" value="Ubqln1"/>
</dbReference>
<dbReference type="eggNOG" id="KOG0010">
    <property type="taxonomic scope" value="Eukaryota"/>
</dbReference>
<dbReference type="InParanoid" id="Q9JJP9"/>
<dbReference type="OrthoDB" id="9450922at2759"/>
<dbReference type="PhylomeDB" id="Q9JJP9"/>
<dbReference type="Reactome" id="R-RNO-8856825">
    <property type="pathway name" value="Cargo recognition for clathrin-mediated endocytosis"/>
</dbReference>
<dbReference type="EvolutionaryTrace" id="Q9JJP9"/>
<dbReference type="PRO" id="PR:Q9JJP9"/>
<dbReference type="Proteomes" id="UP000002494">
    <property type="component" value="Unplaced"/>
</dbReference>
<dbReference type="GO" id="GO:0016235">
    <property type="term" value="C:aggresome"/>
    <property type="evidence" value="ECO:0000250"/>
    <property type="project" value="UniProtKB"/>
</dbReference>
<dbReference type="GO" id="GO:0005776">
    <property type="term" value="C:autophagosome"/>
    <property type="evidence" value="ECO:0000250"/>
    <property type="project" value="UniProtKB"/>
</dbReference>
<dbReference type="GO" id="GO:0005737">
    <property type="term" value="C:cytoplasm"/>
    <property type="evidence" value="ECO:0000250"/>
    <property type="project" value="HGNC-UCL"/>
</dbReference>
<dbReference type="GO" id="GO:0031410">
    <property type="term" value="C:cytoplasmic vesicle"/>
    <property type="evidence" value="ECO:0007669"/>
    <property type="project" value="UniProtKB-KW"/>
</dbReference>
<dbReference type="GO" id="GO:0005829">
    <property type="term" value="C:cytosol"/>
    <property type="evidence" value="ECO:0000318"/>
    <property type="project" value="GO_Central"/>
</dbReference>
<dbReference type="GO" id="GO:0005783">
    <property type="term" value="C:endoplasmic reticulum"/>
    <property type="evidence" value="ECO:0000250"/>
    <property type="project" value="HGNC-UCL"/>
</dbReference>
<dbReference type="GO" id="GO:0005634">
    <property type="term" value="C:nucleus"/>
    <property type="evidence" value="ECO:0007669"/>
    <property type="project" value="UniProtKB-SubCell"/>
</dbReference>
<dbReference type="GO" id="GO:0048471">
    <property type="term" value="C:perinuclear region of cytoplasm"/>
    <property type="evidence" value="ECO:0000250"/>
    <property type="project" value="HGNC-UCL"/>
</dbReference>
<dbReference type="GO" id="GO:0005886">
    <property type="term" value="C:plasma membrane"/>
    <property type="evidence" value="ECO:0000250"/>
    <property type="project" value="UniProtKB"/>
</dbReference>
<dbReference type="GO" id="GO:0000502">
    <property type="term" value="C:proteasome complex"/>
    <property type="evidence" value="ECO:0007669"/>
    <property type="project" value="UniProtKB-KW"/>
</dbReference>
<dbReference type="GO" id="GO:0042802">
    <property type="term" value="F:identical protein binding"/>
    <property type="evidence" value="ECO:0000266"/>
    <property type="project" value="RGD"/>
</dbReference>
<dbReference type="GO" id="GO:0019900">
    <property type="term" value="F:kinase binding"/>
    <property type="evidence" value="ECO:0000266"/>
    <property type="project" value="RGD"/>
</dbReference>
<dbReference type="GO" id="GO:0031593">
    <property type="term" value="F:polyubiquitin modification-dependent protein binding"/>
    <property type="evidence" value="ECO:0000250"/>
    <property type="project" value="UniProtKB"/>
</dbReference>
<dbReference type="GO" id="GO:0019904">
    <property type="term" value="F:protein domain specific binding"/>
    <property type="evidence" value="ECO:0000353"/>
    <property type="project" value="RGD"/>
</dbReference>
<dbReference type="GO" id="GO:0035973">
    <property type="term" value="P:aggrephagy"/>
    <property type="evidence" value="ECO:0000250"/>
    <property type="project" value="UniProtKB"/>
</dbReference>
<dbReference type="GO" id="GO:0000045">
    <property type="term" value="P:autophagosome assembly"/>
    <property type="evidence" value="ECO:0000266"/>
    <property type="project" value="RGD"/>
</dbReference>
<dbReference type="GO" id="GO:0097352">
    <property type="term" value="P:autophagosome maturation"/>
    <property type="evidence" value="ECO:0000266"/>
    <property type="project" value="RGD"/>
</dbReference>
<dbReference type="GO" id="GO:0071456">
    <property type="term" value="P:cellular response to hypoxia"/>
    <property type="evidence" value="ECO:0000250"/>
    <property type="project" value="HGNC"/>
</dbReference>
<dbReference type="GO" id="GO:0036503">
    <property type="term" value="P:ERAD pathway"/>
    <property type="evidence" value="ECO:0000250"/>
    <property type="project" value="UniProtKB"/>
</dbReference>
<dbReference type="GO" id="GO:0016236">
    <property type="term" value="P:macroautophagy"/>
    <property type="evidence" value="ECO:0000266"/>
    <property type="project" value="RGD"/>
</dbReference>
<dbReference type="GO" id="GO:1901340">
    <property type="term" value="P:negative regulation of store-operated calcium channel activity"/>
    <property type="evidence" value="ECO:0000250"/>
    <property type="project" value="UniProtKB"/>
</dbReference>
<dbReference type="GO" id="GO:0034140">
    <property type="term" value="P:negative regulation of toll-like receptor 3 signaling pathway"/>
    <property type="evidence" value="ECO:0000266"/>
    <property type="project" value="RGD"/>
</dbReference>
<dbReference type="GO" id="GO:1904294">
    <property type="term" value="P:positive regulation of ERAD pathway"/>
    <property type="evidence" value="ECO:0000250"/>
    <property type="project" value="UniProtKB"/>
</dbReference>
<dbReference type="GO" id="GO:0031398">
    <property type="term" value="P:positive regulation of protein ubiquitination"/>
    <property type="evidence" value="ECO:0000250"/>
    <property type="project" value="UniProtKB"/>
</dbReference>
<dbReference type="GO" id="GO:0016241">
    <property type="term" value="P:regulation of macroautophagy"/>
    <property type="evidence" value="ECO:0000318"/>
    <property type="project" value="GO_Central"/>
</dbReference>
<dbReference type="GO" id="GO:1902175">
    <property type="term" value="P:regulation of oxidative stress-induced intrinsic apoptotic signaling pathway"/>
    <property type="evidence" value="ECO:0000250"/>
    <property type="project" value="HGNC"/>
</dbReference>
<dbReference type="GO" id="GO:0031396">
    <property type="term" value="P:regulation of protein ubiquitination"/>
    <property type="evidence" value="ECO:0000250"/>
    <property type="project" value="HGNC-UCL"/>
</dbReference>
<dbReference type="GO" id="GO:0034976">
    <property type="term" value="P:response to endoplasmic reticulum stress"/>
    <property type="evidence" value="ECO:0000266"/>
    <property type="project" value="RGD"/>
</dbReference>
<dbReference type="GO" id="GO:0006511">
    <property type="term" value="P:ubiquitin-dependent protein catabolic process"/>
    <property type="evidence" value="ECO:0000318"/>
    <property type="project" value="GO_Central"/>
</dbReference>
<dbReference type="CDD" id="cd14399">
    <property type="entry name" value="UBA_PLICs"/>
    <property type="match status" value="1"/>
</dbReference>
<dbReference type="CDD" id="cd01808">
    <property type="entry name" value="Ubl_PLICs"/>
    <property type="match status" value="1"/>
</dbReference>
<dbReference type="FunFam" id="1.10.260.100:FF:000001">
    <property type="entry name" value="Ubiquilin 1"/>
    <property type="match status" value="1"/>
</dbReference>
<dbReference type="FunFam" id="1.10.260.100:FF:000003">
    <property type="entry name" value="Ubiquilin 1"/>
    <property type="match status" value="1"/>
</dbReference>
<dbReference type="FunFam" id="1.10.8.10:FF:000007">
    <property type="entry name" value="Ubiquilin 1"/>
    <property type="match status" value="1"/>
</dbReference>
<dbReference type="FunFam" id="3.10.20.90:FF:000081">
    <property type="entry name" value="ubiquilin-1 isoform X2"/>
    <property type="match status" value="1"/>
</dbReference>
<dbReference type="Gene3D" id="1.10.260.100">
    <property type="match status" value="2"/>
</dbReference>
<dbReference type="Gene3D" id="1.10.8.10">
    <property type="entry name" value="DNA helicase RuvA subunit, C-terminal domain"/>
    <property type="match status" value="1"/>
</dbReference>
<dbReference type="Gene3D" id="3.10.20.90">
    <property type="entry name" value="Phosphatidylinositol 3-kinase Catalytic Subunit, Chain A, domain 1"/>
    <property type="match status" value="1"/>
</dbReference>
<dbReference type="InterPro" id="IPR006636">
    <property type="entry name" value="STI1_HS-bd"/>
</dbReference>
<dbReference type="InterPro" id="IPR015940">
    <property type="entry name" value="UBA"/>
</dbReference>
<dbReference type="InterPro" id="IPR009060">
    <property type="entry name" value="UBA-like_sf"/>
</dbReference>
<dbReference type="InterPro" id="IPR015496">
    <property type="entry name" value="Ubiquilin"/>
</dbReference>
<dbReference type="InterPro" id="IPR000626">
    <property type="entry name" value="Ubiquitin-like_dom"/>
</dbReference>
<dbReference type="InterPro" id="IPR029071">
    <property type="entry name" value="Ubiquitin-like_domsf"/>
</dbReference>
<dbReference type="PANTHER" id="PTHR10677">
    <property type="entry name" value="UBIQUILIN"/>
    <property type="match status" value="1"/>
</dbReference>
<dbReference type="PANTHER" id="PTHR10677:SF16">
    <property type="entry name" value="UBIQUILIN-1"/>
    <property type="match status" value="1"/>
</dbReference>
<dbReference type="Pfam" id="PF00627">
    <property type="entry name" value="UBA"/>
    <property type="match status" value="1"/>
</dbReference>
<dbReference type="Pfam" id="PF00240">
    <property type="entry name" value="ubiquitin"/>
    <property type="match status" value="1"/>
</dbReference>
<dbReference type="Pfam" id="PF23195">
    <property type="entry name" value="UBQLN1"/>
    <property type="match status" value="1"/>
</dbReference>
<dbReference type="SMART" id="SM00727">
    <property type="entry name" value="STI1"/>
    <property type="match status" value="4"/>
</dbReference>
<dbReference type="SMART" id="SM00165">
    <property type="entry name" value="UBA"/>
    <property type="match status" value="1"/>
</dbReference>
<dbReference type="SMART" id="SM00213">
    <property type="entry name" value="UBQ"/>
    <property type="match status" value="1"/>
</dbReference>
<dbReference type="SUPFAM" id="SSF46934">
    <property type="entry name" value="UBA-like"/>
    <property type="match status" value="1"/>
</dbReference>
<dbReference type="SUPFAM" id="SSF54236">
    <property type="entry name" value="Ubiquitin-like"/>
    <property type="match status" value="1"/>
</dbReference>
<dbReference type="PROSITE" id="PS50030">
    <property type="entry name" value="UBA"/>
    <property type="match status" value="1"/>
</dbReference>
<dbReference type="PROSITE" id="PS50053">
    <property type="entry name" value="UBIQUITIN_2"/>
    <property type="match status" value="1"/>
</dbReference>
<keyword id="KW-0002">3D-structure</keyword>
<keyword id="KW-0007">Acetylation</keyword>
<keyword id="KW-0072">Autophagy</keyword>
<keyword id="KW-1003">Cell membrane</keyword>
<keyword id="KW-0963">Cytoplasm</keyword>
<keyword id="KW-0968">Cytoplasmic vesicle</keyword>
<keyword id="KW-0903">Direct protein sequencing</keyword>
<keyword id="KW-0256">Endoplasmic reticulum</keyword>
<keyword id="KW-0472">Membrane</keyword>
<keyword id="KW-0539">Nucleus</keyword>
<keyword id="KW-0647">Proteasome</keyword>
<keyword id="KW-1185">Reference proteome</keyword>
<keyword id="KW-0832">Ubl conjugation</keyword>
<organism>
    <name type="scientific">Rattus norvegicus</name>
    <name type="common">Rat</name>
    <dbReference type="NCBI Taxonomy" id="10116"/>
    <lineage>
        <taxon>Eukaryota</taxon>
        <taxon>Metazoa</taxon>
        <taxon>Chordata</taxon>
        <taxon>Craniata</taxon>
        <taxon>Vertebrata</taxon>
        <taxon>Euteleostomi</taxon>
        <taxon>Mammalia</taxon>
        <taxon>Eutheria</taxon>
        <taxon>Euarchontoglires</taxon>
        <taxon>Glires</taxon>
        <taxon>Rodentia</taxon>
        <taxon>Myomorpha</taxon>
        <taxon>Muroidea</taxon>
        <taxon>Muridae</taxon>
        <taxon>Murinae</taxon>
        <taxon>Rattus</taxon>
    </lineage>
</organism>
<comment type="function">
    <text evidence="2 7 8">Plays an important role in the regulation of different protein degradation mechanisms and pathways including ubiquitin-proteasome system (UPS), autophagy and endoplasmic reticulum-associated protein degradation (ERAD) pathway. Mediates the proteasomal targeting of misfolded or accumulated proteins for degradation by binding (via UBA domain) to their polyubiquitin chains and by interacting (via ubiquitin-like domain) with the subunits of the proteasome. Plays a role in the ERAD pathway via its interaction with ER-localized proteins UBXN4, VCP and HERPUD1 and may form a link between the polyubiquitinated ERAD substrates and the proteasome. Plays a role in unfolded protein response (UPR) by attenuating the induction of UPR-inducible genes, DDTI3/CHOP, HSPA5 and PDIA2 during ER stress. Involved in the regulation of macroautophagy and autophagosome formation; required for maturation of autophagy-related protein LC3 from the cytosolic form LC3-I to the membrane-bound form LC3-II and may assist in the maturation of autophagosomes to autolysosomes by mediating autophagosome-lysosome fusion. Negatively regulates the TICAM1/TRIF-dependent toll-like receptor signaling pathway by decreasing the abundance of TICAM1 via the autophagic pathway. Promotes the ubiquitination and lysosomal degradation of ORAI1, consequently down-regulating the ORAI1-mediated Ca2+ mobilization (By similarity). Suppresses the maturation and proteasomal degradation of amyloid beta A4 protein (A4) by stimulating the lysine 63 (K63)-linked polyubiquitination. Delays the maturation of A4 by sequestering it in the Golgi apparatus and preventing its transport to the cell surface for subsequent processing (PubMed:22847417). Promotes the surface expression of GABA-A receptors (PubMed:11528422). Ubiquitinates BCL2L10 and thereby stabilizes protein abundance (By similarity).</text>
</comment>
<comment type="subunit">
    <text evidence="1 2 7 9">Monomer and homodimer. Heterodimer with UBQLN2. Binds CD47 (By similarity). Binds NBL1 (PubMed:9303440). Binds GABRA1, GABRA2, GABRA3, GABRA6, GABRB1, GABRB2 and GABRB3 (PubMed:11528422). Binds UBE3A, BTRC, P4HB and MTOR. Interacts with the proteasome 19S subunit. Interacts (via ubiquitin-like domain) with TREX1; the interaction is direct and may control TREX1 subcellular location. Forms a complex with UBXN4 and VCP. Interacts (via UBA domain) with UBQLN4 (via ubiquitin-like domain). Found in a complex with UBQLN2 and MAP1LC3A/B/C. The monomeric form interacts with PSEN1 and PSEN2. Interacts with ORAI1. Interacts (via UBA domain) with TICAM1. Interacts with EPS15. Interacts (via UBA domain) with UBA52 and (via ubiquitin-like domain) with PSMD3 and PSMD4. Interacts with HERPUD1. Interacts with MAP1LC3A/B/C in the presence of UBQLN4. Interacts (via ubiquitin-like domain) with EPS15 (via UIM domains) and both the ubiquitinated and non-ubiquitinated forms can interact with EPS15. Interacts (via ubiquitin-like domain) with EPS15L1, HGS (via UIM domain) and STAM2 (via UIM domain) (By similarity). Interacts with BCL2L10/BCL-B; in the cytoplasm (By similarity).</text>
</comment>
<comment type="subcellular location">
    <subcellularLocation>
        <location evidence="2">Nucleus</location>
    </subcellularLocation>
    <subcellularLocation>
        <location evidence="7">Cytoplasm</location>
    </subcellularLocation>
    <subcellularLocation>
        <location evidence="2">Endoplasmic reticulum</location>
    </subcellularLocation>
    <subcellularLocation>
        <location evidence="2">Cytoplasmic vesicle</location>
        <location evidence="2">Autophagosome</location>
    </subcellularLocation>
    <subcellularLocation>
        <location evidence="2">Cell membrane</location>
    </subcellularLocation>
    <text evidence="2 7">Recruited to the ER during ER-associated protein degradation (ERAD). Colocalizes with PSEN1 in the cell membrane and in cytoplasmic juxtanuclear structures called aggresomes. Colocalizes with ORAI1 and TICAM1 in the autophagosome. Colocalizes with EPS15 and HGS in ubiquitin-rich cytoplasmic aggregates that are not endocytic compartments and with EPS15 also in aggresomes (By similarity). Detected in neuronal processes and synapses (PubMed:11528422).</text>
</comment>
<comment type="domain">
    <text evidence="2">The UBA domain mediates binding to PSEN1 and PSEN2. It also binds ubiquitin with micromolar affinity, independently of polyubiquitin linkage type. Essential for its association with microtubule-associated protein 1 light chain 3 (MAP1LC3).</text>
</comment>
<comment type="domain">
    <text evidence="2">The ubiquitin-like domain mediates its association with the subunits of the proteasome.</text>
</comment>
<comment type="domain">
    <text evidence="2">Dimerization is dependent upon the central region of the protein containing the STI1 domains and is independent of its ubiquitin-like and UBA domains.</text>
</comment>
<comment type="PTM">
    <text evidence="2">Degraded during both macroautophagy and during chaperone-mediated autophagy (CMA).</text>
</comment>
<comment type="PTM">
    <text evidence="2">Phosphorylated.</text>
</comment>
<comment type="PTM">
    <text evidence="2">Ubiquitinated.</text>
</comment>
<name>UBQL1_RAT</name>
<accession>Q9JJP9</accession>
<accession>Q6IN34</accession>